<reference key="1">
    <citation type="journal article" date="1994" name="J. Virol.">
        <title>An apoptosis-inhibiting gene from a nuclear polyhedrosis virus encoding a polypeptide with Cys/His sequence motifs.</title>
        <authorList>
            <person name="Birnbaum M.J."/>
            <person name="Clem R.J."/>
            <person name="Miller L.K."/>
        </authorList>
    </citation>
    <scope>NUCLEOTIDE SEQUENCE [GENOMIC DNA]</scope>
</reference>
<reference key="2">
    <citation type="journal article" date="1997" name="Virology">
        <title>The sequence of the Orgyia pseudotsugata multinucleocapsid nuclear polyhedrosis virus genome.</title>
        <authorList>
            <person name="Ahrens C.H."/>
            <person name="Russell R.R."/>
            <person name="Funk C.J."/>
            <person name="Evans J."/>
            <person name="Harwood S."/>
            <person name="Rohrmann G.F."/>
        </authorList>
    </citation>
    <scope>NUCLEOTIDE SEQUENCE [LARGE SCALE GENOMIC DNA]</scope>
</reference>
<reference key="3">
    <citation type="journal article" date="2004" name="Virus Res.">
        <title>Ubiquitin protein ligase activity of the anti-apoptotic baculovirus protein Op-IAP3.</title>
        <authorList>
            <person name="Green M.C."/>
            <person name="Monser K.P."/>
            <person name="Clem R.J."/>
        </authorList>
    </citation>
    <scope>FUNCTION</scope>
</reference>
<comment type="function">
    <text evidence="3">RING-finger E3 ubiquitin ligase required to prevent cellular apoptosis in infected cells. Ubiquitinates and subsequently targets host pro-apoptotic cellular proteins such as HID for degradation by the proteasome.</text>
</comment>
<comment type="catalytic activity">
    <reaction>
        <text>S-ubiquitinyl-[E2 ubiquitin-conjugating enzyme]-L-cysteine + [acceptor protein]-L-lysine = [E2 ubiquitin-conjugating enzyme]-L-cysteine + N(6)-ubiquitinyl-[acceptor protein]-L-lysine.</text>
        <dbReference type="EC" id="2.3.2.27"/>
    </reaction>
</comment>
<comment type="PTM">
    <text>Auto-ubiquitinated.</text>
</comment>
<comment type="similarity">
    <text evidence="4">Belongs to the IAP family.</text>
</comment>
<name>IAP3_NPVOP</name>
<protein>
    <recommendedName>
        <fullName>E3 ubiquitin-protein ligase IAP-3</fullName>
        <ecNumber>2.3.2.27</ecNumber>
    </recommendedName>
    <alternativeName>
        <fullName>IAP-3</fullName>
    </alternativeName>
    <alternativeName>
        <fullName evidence="4">RING-type E3 ubiquitin transferase IAP-3</fullName>
    </alternativeName>
</protein>
<dbReference type="EC" id="2.3.2.27"/>
<dbReference type="EMBL" id="L22564">
    <property type="protein sequence ID" value="AAB02610.1"/>
    <property type="molecule type" value="Genomic_DNA"/>
</dbReference>
<dbReference type="EMBL" id="U75930">
    <property type="protein sequence ID" value="AAC59034.1"/>
    <property type="molecule type" value="Genomic_DNA"/>
</dbReference>
<dbReference type="PIR" id="A53989">
    <property type="entry name" value="A53989"/>
</dbReference>
<dbReference type="RefSeq" id="NP_046191.1">
    <property type="nucleotide sequence ID" value="NC_001875.2"/>
</dbReference>
<dbReference type="SMR" id="P41437"/>
<dbReference type="MEROPS" id="I32.010"/>
<dbReference type="KEGG" id="vg:912041"/>
<dbReference type="OrthoDB" id="9255at10239"/>
<dbReference type="Proteomes" id="UP000009248">
    <property type="component" value="Genome"/>
</dbReference>
<dbReference type="GO" id="GO:0043027">
    <property type="term" value="F:cysteine-type endopeptidase inhibitor activity involved in apoptotic process"/>
    <property type="evidence" value="ECO:0007669"/>
    <property type="project" value="TreeGrafter"/>
</dbReference>
<dbReference type="GO" id="GO:0061630">
    <property type="term" value="F:ubiquitin protein ligase activity"/>
    <property type="evidence" value="ECO:0007669"/>
    <property type="project" value="TreeGrafter"/>
</dbReference>
<dbReference type="GO" id="GO:0008270">
    <property type="term" value="F:zinc ion binding"/>
    <property type="evidence" value="ECO:0007669"/>
    <property type="project" value="UniProtKB-KW"/>
</dbReference>
<dbReference type="GO" id="GO:0043066">
    <property type="term" value="P:negative regulation of apoptotic process"/>
    <property type="evidence" value="ECO:0007669"/>
    <property type="project" value="TreeGrafter"/>
</dbReference>
<dbReference type="GO" id="GO:0090263">
    <property type="term" value="P:positive regulation of canonical Wnt signaling pathway"/>
    <property type="evidence" value="ECO:0007669"/>
    <property type="project" value="TreeGrafter"/>
</dbReference>
<dbReference type="GO" id="GO:0031398">
    <property type="term" value="P:positive regulation of protein ubiquitination"/>
    <property type="evidence" value="ECO:0007669"/>
    <property type="project" value="TreeGrafter"/>
</dbReference>
<dbReference type="GO" id="GO:0051726">
    <property type="term" value="P:regulation of cell cycle"/>
    <property type="evidence" value="ECO:0007669"/>
    <property type="project" value="TreeGrafter"/>
</dbReference>
<dbReference type="GO" id="GO:0039648">
    <property type="term" value="P:symbiont-mediated perturbation of host ubiquitin-like protein modification"/>
    <property type="evidence" value="ECO:0007669"/>
    <property type="project" value="UniProtKB-KW"/>
</dbReference>
<dbReference type="CDD" id="cd00022">
    <property type="entry name" value="BIR"/>
    <property type="match status" value="2"/>
</dbReference>
<dbReference type="CDD" id="cd16510">
    <property type="entry name" value="RING-HC_IAPs"/>
    <property type="match status" value="1"/>
</dbReference>
<dbReference type="FunFam" id="1.10.1170.10:FF:000002">
    <property type="entry name" value="Baculoviral IAP repeat containing 7"/>
    <property type="match status" value="1"/>
</dbReference>
<dbReference type="FunFam" id="1.10.1170.10:FF:000003">
    <property type="entry name" value="E3 ubiquitin-protein ligase XIAP"/>
    <property type="match status" value="1"/>
</dbReference>
<dbReference type="Gene3D" id="1.10.1170.10">
    <property type="entry name" value="Inhibitor Of Apoptosis Protein (2mihbC-IAP-1), Chain A"/>
    <property type="match status" value="2"/>
</dbReference>
<dbReference type="Gene3D" id="3.30.40.10">
    <property type="entry name" value="Zinc/RING finger domain, C3HC4 (zinc finger)"/>
    <property type="match status" value="1"/>
</dbReference>
<dbReference type="InterPro" id="IPR001370">
    <property type="entry name" value="BIR_rpt"/>
</dbReference>
<dbReference type="InterPro" id="IPR050784">
    <property type="entry name" value="IAP"/>
</dbReference>
<dbReference type="InterPro" id="IPR001841">
    <property type="entry name" value="Znf_RING"/>
</dbReference>
<dbReference type="InterPro" id="IPR013083">
    <property type="entry name" value="Znf_RING/FYVE/PHD"/>
</dbReference>
<dbReference type="PANTHER" id="PTHR10044:SF174">
    <property type="entry name" value="DEATH-ASSOCIATED INHIBITOR OF APOPTOSIS 1"/>
    <property type="match status" value="1"/>
</dbReference>
<dbReference type="PANTHER" id="PTHR10044">
    <property type="entry name" value="INHIBITOR OF APOPTOSIS"/>
    <property type="match status" value="1"/>
</dbReference>
<dbReference type="Pfam" id="PF00653">
    <property type="entry name" value="BIR"/>
    <property type="match status" value="2"/>
</dbReference>
<dbReference type="Pfam" id="PF13920">
    <property type="entry name" value="zf-C3HC4_3"/>
    <property type="match status" value="1"/>
</dbReference>
<dbReference type="SMART" id="SM00238">
    <property type="entry name" value="BIR"/>
    <property type="match status" value="2"/>
</dbReference>
<dbReference type="SUPFAM" id="SSF57924">
    <property type="entry name" value="Inhibitor of apoptosis (IAP) repeat"/>
    <property type="match status" value="2"/>
</dbReference>
<dbReference type="PROSITE" id="PS01282">
    <property type="entry name" value="BIR_REPEAT_1"/>
    <property type="match status" value="2"/>
</dbReference>
<dbReference type="PROSITE" id="PS50143">
    <property type="entry name" value="BIR_REPEAT_2"/>
    <property type="match status" value="2"/>
</dbReference>
<dbReference type="PROSITE" id="PS50089">
    <property type="entry name" value="ZF_RING_2"/>
    <property type="match status" value="1"/>
</dbReference>
<keyword id="KW-0053">Apoptosis</keyword>
<keyword id="KW-0945">Host-virus interaction</keyword>
<keyword id="KW-0479">Metal-binding</keyword>
<keyword id="KW-1128">Modulation of host ubiquitin pathway by viral E3 ligase</keyword>
<keyword id="KW-1130">Modulation of host ubiquitin pathway by virus</keyword>
<keyword id="KW-1185">Reference proteome</keyword>
<keyword id="KW-0677">Repeat</keyword>
<keyword id="KW-0808">Transferase</keyword>
<keyword id="KW-0832">Ubl conjugation</keyword>
<keyword id="KW-0833">Ubl conjugation pathway</keyword>
<keyword id="KW-0862">Zinc</keyword>
<keyword id="KW-0863">Zinc-finger</keyword>
<accession>P41437</accession>
<evidence type="ECO:0000255" key="1">
    <source>
        <dbReference type="PROSITE-ProRule" id="PRU00029"/>
    </source>
</evidence>
<evidence type="ECO:0000255" key="2">
    <source>
        <dbReference type="PROSITE-ProRule" id="PRU00175"/>
    </source>
</evidence>
<evidence type="ECO:0000269" key="3">
    <source>
    </source>
</evidence>
<evidence type="ECO:0000305" key="4"/>
<sequence length="268" mass="30076">MSSRAIGAPQEGADMKNKAARLGTYTNWPVQFLEPSRMAASGFYYLGRGDEVRCAFCKVEITNWVRGDDPETDHKRWAPQCPFVRNNAHDTPHDRAPPARSAAAHPQYATEAARLRTFAEWPRGLKQRPEELAEAGFFYTGQGDKTRCFCCDGGLKDWEPDDAPWQQHARWYDRCEYVLLVKGRDFVQRVMTEACVVRDADNEPHIERPAVEAEVADDRLCKICLGAEKTVCFVPCGHVVACGKCAAGVTTCPVCRGQLDKAVRMYQV</sequence>
<feature type="chain" id="PRO_0000122371" description="E3 ubiquitin-protein ligase IAP-3">
    <location>
        <begin position="1"/>
        <end position="268"/>
    </location>
</feature>
<feature type="repeat" description="BIR 1">
    <location>
        <begin position="18"/>
        <end position="84"/>
    </location>
</feature>
<feature type="repeat" description="BIR 2">
    <location>
        <begin position="111"/>
        <end position="178"/>
    </location>
</feature>
<feature type="zinc finger region" description="RING-type" evidence="2">
    <location>
        <begin position="221"/>
        <end position="256"/>
    </location>
</feature>
<feature type="binding site" evidence="1">
    <location>
        <position position="148"/>
    </location>
    <ligand>
        <name>Zn(2+)</name>
        <dbReference type="ChEBI" id="CHEBI:29105"/>
    </ligand>
</feature>
<feature type="binding site" evidence="1">
    <location>
        <position position="151"/>
    </location>
    <ligand>
        <name>Zn(2+)</name>
        <dbReference type="ChEBI" id="CHEBI:29105"/>
    </ligand>
</feature>
<feature type="binding site" evidence="1">
    <location>
        <position position="168"/>
    </location>
    <ligand>
        <name>Zn(2+)</name>
        <dbReference type="ChEBI" id="CHEBI:29105"/>
    </ligand>
</feature>
<feature type="binding site" evidence="1">
    <location>
        <position position="175"/>
    </location>
    <ligand>
        <name>Zn(2+)</name>
        <dbReference type="ChEBI" id="CHEBI:29105"/>
    </ligand>
</feature>
<gene>
    <name type="primary">IAP3</name>
    <name type="synonym">IAP</name>
    <name type="ORF">ORF35</name>
</gene>
<organism>
    <name type="scientific">Orgyia pseudotsugata multicapsid polyhedrosis virus</name>
    <name type="common">OpMNPV</name>
    <dbReference type="NCBI Taxonomy" id="262177"/>
    <lineage>
        <taxon>Viruses</taxon>
        <taxon>Viruses incertae sedis</taxon>
        <taxon>Naldaviricetes</taxon>
        <taxon>Lefavirales</taxon>
        <taxon>Baculoviridae</taxon>
        <taxon>Alphabaculovirus</taxon>
        <taxon>Alphabaculovirus orpseudotsugatae</taxon>
    </lineage>
</organism>
<organismHost>
    <name type="scientific">Orgyia pseudotsugata</name>
    <name type="common">Douglas-fir tussock moth</name>
    <dbReference type="NCBI Taxonomy" id="33414"/>
</organismHost>
<proteinExistence type="inferred from homology"/>